<accession>P33205</accession>
<accession>P70042</accession>
<accession>Q01364</accession>
<accession>Q641H9</accession>
<organism>
    <name type="scientific">Xenopus laevis</name>
    <name type="common">African clawed frog</name>
    <dbReference type="NCBI Taxonomy" id="8355"/>
    <lineage>
        <taxon>Eukaryota</taxon>
        <taxon>Metazoa</taxon>
        <taxon>Chordata</taxon>
        <taxon>Craniata</taxon>
        <taxon>Vertebrata</taxon>
        <taxon>Euteleostomi</taxon>
        <taxon>Amphibia</taxon>
        <taxon>Batrachia</taxon>
        <taxon>Anura</taxon>
        <taxon>Pipoidea</taxon>
        <taxon>Pipidae</taxon>
        <taxon>Xenopodinae</taxon>
        <taxon>Xenopus</taxon>
        <taxon>Xenopus</taxon>
    </lineage>
</organism>
<protein>
    <recommendedName>
        <fullName>Forkhead box protein A4-A</fullName>
        <shortName>FoxA4-A</shortName>
        <shortName>FoxA4a</shortName>
    </recommendedName>
    <alternativeName>
        <fullName>Fork head domain-related protein 1</fullName>
        <shortName>xFD-1</shortName>
    </alternativeName>
    <alternativeName>
        <fullName>Protein pintallavis</fullName>
    </alternativeName>
</protein>
<evidence type="ECO:0000255" key="1">
    <source>
        <dbReference type="PROSITE-ProRule" id="PRU00089"/>
    </source>
</evidence>
<evidence type="ECO:0000256" key="2">
    <source>
        <dbReference type="SAM" id="MobiDB-lite"/>
    </source>
</evidence>
<evidence type="ECO:0000269" key="3">
    <source>
    </source>
</evidence>
<evidence type="ECO:0000269" key="4">
    <source>
    </source>
</evidence>
<evidence type="ECO:0000269" key="5">
    <source>
    </source>
</evidence>
<evidence type="ECO:0000269" key="6">
    <source>
    </source>
</evidence>
<evidence type="ECO:0000269" key="7">
    <source>
    </source>
</evidence>
<evidence type="ECO:0000269" key="8">
    <source>
    </source>
</evidence>
<evidence type="ECO:0000269" key="9">
    <source>
    </source>
</evidence>
<evidence type="ECO:0000269" key="10">
    <source>
    </source>
</evidence>
<evidence type="ECO:0000269" key="11">
    <source>
    </source>
</evidence>
<evidence type="ECO:0000305" key="12"/>
<gene>
    <name type="primary">foxa4-a</name>
</gene>
<reference key="1">
    <citation type="journal article" date="1992" name="Development">
        <title>Pintallavis, a gene expressed in the organizer and midline cells of frog embryos: involvement in the development of the neural axis.</title>
        <authorList>
            <person name="Ruiz i Altaba A."/>
            <person name="Jessell T.M."/>
        </authorList>
    </citation>
    <scope>NUCLEOTIDE SEQUENCE [MRNA]</scope>
    <scope>FUNCTION</scope>
    <scope>TISSUE SPECIFICITY</scope>
    <scope>DEVELOPMENTAL STAGE</scope>
    <source>
        <tissue>Neurula</tissue>
    </source>
</reference>
<reference key="2">
    <citation type="journal article" date="1992" name="Mech. Dev.">
        <title>Activin A induced expression of a fork head related gene in posterior chordamesoderm (notochord) of Xenopus laevis embryos.</title>
        <authorList>
            <person name="Knoechel S."/>
            <person name="Lef J."/>
            <person name="Clement J.H."/>
            <person name="Klocke B."/>
            <person name="Hille S."/>
            <person name="Koester M."/>
            <person name="Knoechel W."/>
        </authorList>
    </citation>
    <scope>NUCLEOTIDE SEQUENCE [GENOMIC DNA / MRNA]</scope>
    <scope>FUNCTION</scope>
    <scope>TISSUE SPECIFICITY</scope>
    <scope>DEVELOPMENTAL STAGE</scope>
    <scope>INDUCTION</scope>
    <source>
        <tissue>Gastrula</tissue>
    </source>
</reference>
<reference key="3">
    <citation type="submission" date="1996-11" db="EMBL/GenBank/DDBJ databases">
        <authorList>
            <person name="Kaufmann E."/>
            <person name="Paul H."/>
            <person name="Friedle H."/>
            <person name="Metz A."/>
            <person name="Scheucher M."/>
            <person name="Clement J.H."/>
            <person name="Knoechel W."/>
        </authorList>
    </citation>
    <scope>SEQUENCE REVISION TO 245</scope>
</reference>
<reference key="4">
    <citation type="submission" date="2004-09" db="EMBL/GenBank/DDBJ databases">
        <authorList>
            <consortium name="NIH - Xenopus Gene Collection (XGC) project"/>
        </authorList>
    </citation>
    <scope>NUCLEOTIDE SEQUENCE [LARGE SCALE MRNA]</scope>
    <source>
        <tissue>Embryo</tissue>
    </source>
</reference>
<reference key="5">
    <citation type="journal article" date="1993" name="Proc. Natl. Acad. Sci. U.S.A.">
        <title>Ectopic neural expression of a floor plate marker in frog embryos injected with the midline transcription factor Pintallavis.</title>
        <authorList>
            <person name="Ruiz i Altaba A."/>
            <person name="Cox C."/>
            <person name="Jessell T.M."/>
            <person name="Klar A."/>
        </authorList>
    </citation>
    <scope>FUNCTION</scope>
</reference>
<reference key="6">
    <citation type="journal article" date="1995" name="Development">
        <title>Patterning of the mesoderm in Xenopus: dose-dependent and synergistic effects of Brachyury and Pintallavis.</title>
        <authorList>
            <person name="O'Reilly M.-A.J."/>
            <person name="Smith J.C."/>
            <person name="Cunliffe V."/>
        </authorList>
    </citation>
    <scope>FUNCTION</scope>
</reference>
<reference key="7">
    <citation type="journal article" date="1995" name="Dev. Genet.">
        <title>Differential expression of fork head genes during early Xenopus and zebrafish development.</title>
        <authorList>
            <person name="Dirksen M.-L."/>
            <person name="Jamrich M."/>
        </authorList>
    </citation>
    <scope>TISSUE SPECIFICITY</scope>
</reference>
<reference key="8">
    <citation type="journal article" date="1995" name="J. Mol. Biol.">
        <title>DNA recognition site analysis of Xenopus winged helix proteins.</title>
        <authorList>
            <person name="Kaufmann E."/>
            <person name="Mueller D."/>
            <person name="Knoechel W."/>
        </authorList>
    </citation>
    <scope>DNA-BINDING</scope>
</reference>
<reference key="9">
    <citation type="journal article" date="1996" name="Dev. Biol.">
        <title>Overexpression of the homeobox gene Xnot-2 leads to notochord formation in Xenopus.</title>
        <authorList>
            <person name="Gont L.K."/>
            <person name="Fainsod A."/>
            <person name="Kim S.-H."/>
            <person name="De Robertis E.M."/>
        </authorList>
    </citation>
    <scope>INDUCTION</scope>
</reference>
<reference key="10">
    <citation type="journal article" date="1996" name="Int. J. Dev. Biol.">
        <title>A fork head related multigene family is transcribed in Xenopus laevis embryos.</title>
        <authorList>
            <person name="Lef J."/>
            <person name="Dege P."/>
            <person name="Scheucher M."/>
            <person name="Forsbach-Birk V."/>
            <person name="Clement J.H."/>
            <person name="Knoechel W."/>
        </authorList>
    </citation>
    <scope>TISSUE SPECIFICITY</scope>
    <scope>DEVELOPMENTAL STAGE</scope>
</reference>
<reference key="11">
    <citation type="journal article" date="1999" name="Development">
        <title>derriere: a TGF-beta family member required for posterior development in Xenopus.</title>
        <authorList>
            <person name="Sun B.I."/>
            <person name="Bush S.M."/>
            <person name="Collins-Racie L.A."/>
            <person name="LaVallie E.R."/>
            <person name="DiBlasio-Smith E.A."/>
            <person name="Wolfman N.M."/>
            <person name="McCoy J.M."/>
            <person name="Sive H.L."/>
        </authorList>
    </citation>
    <scope>INDUCTION</scope>
</reference>
<reference key="12">
    <citation type="journal article" date="2004" name="Development">
        <title>Patterning the forebrain: FoxA4a/Pintallavis and Xvent2 determine the posterior limit of Xanf1 expression in the neural plate.</title>
        <authorList>
            <person name="Martynova N."/>
            <person name="Eroshkin F."/>
            <person name="Ermakova G."/>
            <person name="Bayramov A."/>
            <person name="Gray J."/>
            <person name="Grainger R."/>
            <person name="Zaraisky A."/>
        </authorList>
    </citation>
    <scope>FUNCTION</scope>
</reference>
<reference key="13">
    <citation type="journal article" date="2005" name="Gene">
        <title>Of fox and frogs: fox (fork head/winged helix) transcription factors in Xenopus development.</title>
        <authorList>
            <person name="Pohl B.S."/>
            <person name="Knoechel W."/>
        </authorList>
    </citation>
    <scope>REVIEW</scope>
</reference>
<keyword id="KW-0217">Developmental protein</keyword>
<keyword id="KW-0221">Differentiation</keyword>
<keyword id="KW-0238">DNA-binding</keyword>
<keyword id="KW-0524">Neurogenesis</keyword>
<keyword id="KW-0539">Nucleus</keyword>
<keyword id="KW-1185">Reference proteome</keyword>
<keyword id="KW-0678">Repressor</keyword>
<keyword id="KW-0804">Transcription</keyword>
<keyword id="KW-0805">Transcription regulation</keyword>
<comment type="function">
    <text evidence="4 5 6 8 9">Transcriptional repressor involved in embryonic nervous system development. Plays a role in the induction and patterning of the anterior-posterior neural axis. Involved in the establishment of floor plate differentiation from neural plate cells during gastrulation. Binds the anf1 promoter sequence to restrict expression of anf1 to the anterior of the neural plate, thereby patterning the forebrain. Can bind to the HNF-3-alpha DNA target sequence. Cooperates with t/bra in a dose-dependent manner to specify dorsal mesoderm formation, including notochord. Binds to DNA via the target sequence 5'-[GA]TAAA[TC]A-3', with 5'-GTAAATA-3' being the preferred binding site.</text>
</comment>
<comment type="subcellular location">
    <subcellularLocation>
        <location evidence="12">Nucleus</location>
    </subcellularLocation>
</comment>
<comment type="tissue specificity">
    <text evidence="4 5 7 11">During stages 8.5 to 10, expressed in the part of the dorsal mesoderm invaginating the dorsal blastopore lip (Spemann organizer), as a direct response to dorsal mesodermal induction. At stage 12 (mid-gastrulation), restricted to the dorsal midline in the deeper layers of mesodermal cells. Continuously present in the posterior portion of invaginated mesoderm and expressed within the notochord. Also present in the midline of the neural plate during gastrulation, but absent from the notoplate in exogastrula embryos. Expression in the notochord continues in neurula-stage embryos and at stage 20 in addition to the notochord, expression is seen in the pharyngeal endoderm.</text>
</comment>
<comment type="developmental stage">
    <text evidence="4 5 11">First expressed at the late blastula stage (stage 9). Most abundant during gastrulation, with levels peaking in mid-gastrula embryos (stage 12) before declining rapidly at the end of neurulation and becoming barely detectable in the late tailbud-early tadpole stage.</text>
</comment>
<comment type="induction">
    <text evidence="3 4 10">By activin, derriere and not2.</text>
</comment>
<proteinExistence type="evidence at protein level"/>
<sequence>MLNRVKLEIKDPMDWNTMYQENEMYSGIHNMTNVLPSNSFLPNDVSTVTTSMPYMSNGLPGPVTSIQGNIGSLGSMPQGMVGSLAPPPSTAAYPLGYCQGESEFQRDPRTYRRNYSHAKPPYSYISLITMAIQQAPNKMMTLNEIYQWIIDLFPYYRQNQQRWQNSIRHSLSFNDCFVKVPRSPEKPGKGSYWTLHPESGNMFENGCYLRRQKRFKCERSKSGEGEKKVNKPGEETGGNLKENPVGYDDCSSSRSPQAAVNDGGRDSTGSSIHQACGSSPVGLSPTSEQAGTASQLMYPLGLSNDGYLGLVGEDVHLKHDPFSGRHPFSITQLMSSEQDQTYANKMEMCPTTDHLVHYSNYSSDYHNMASKNGLDMQTSSSTDNGYYANMYSRPILSSL</sequence>
<name>FXA4A_XENLA</name>
<feature type="chain" id="PRO_0000091897" description="Forkhead box protein A4-A">
    <location>
        <begin position="1"/>
        <end position="399"/>
    </location>
</feature>
<feature type="DNA-binding region" description="Fork-head" evidence="1">
    <location>
        <begin position="119"/>
        <end position="213"/>
    </location>
</feature>
<feature type="region of interest" description="Disordered" evidence="2">
    <location>
        <begin position="219"/>
        <end position="290"/>
    </location>
</feature>
<feature type="compositionally biased region" description="Basic and acidic residues" evidence="2">
    <location>
        <begin position="219"/>
        <end position="234"/>
    </location>
</feature>
<feature type="compositionally biased region" description="Polar residues" evidence="2">
    <location>
        <begin position="267"/>
        <end position="277"/>
    </location>
</feature>
<feature type="sequence conflict" description="In Ref. 1; CAA46290." evidence="12" ref="1">
    <original>V</original>
    <variation>L</variation>
    <location>
        <position position="245"/>
    </location>
</feature>
<feature type="sequence conflict" description="In Ref. 2; AAD03479." evidence="12" ref="2">
    <original>S</original>
    <variation>N</variation>
    <location>
        <position position="362"/>
    </location>
</feature>
<feature type="sequence conflict" description="In Ref. 4; AAH82358." evidence="12" ref="4">
    <original>T</original>
    <variation>N</variation>
    <location>
        <position position="382"/>
    </location>
</feature>
<dbReference type="EMBL" id="X65171">
    <property type="protein sequence ID" value="CAA46290.1"/>
    <property type="molecule type" value="mRNA"/>
</dbReference>
<dbReference type="EMBL" id="U65751">
    <property type="protein sequence ID" value="AAD03479.1"/>
    <property type="molecule type" value="Genomic_DNA"/>
</dbReference>
<dbReference type="EMBL" id="BC082358">
    <property type="protein sequence ID" value="AAH82358.1"/>
    <property type="molecule type" value="mRNA"/>
</dbReference>
<dbReference type="PIR" id="S35719">
    <property type="entry name" value="S35719"/>
</dbReference>
<dbReference type="RefSeq" id="NP_001080963.1">
    <property type="nucleotide sequence ID" value="NM_001087494.1"/>
</dbReference>
<dbReference type="SMR" id="P33205"/>
<dbReference type="GeneID" id="394304"/>
<dbReference type="KEGG" id="xla:394304"/>
<dbReference type="AGR" id="Xenbase:XB-GENE-865612"/>
<dbReference type="CTD" id="394304"/>
<dbReference type="Xenbase" id="XB-GENE-865612">
    <property type="gene designation" value="foxa4.L"/>
</dbReference>
<dbReference type="OrthoDB" id="5954824at2759"/>
<dbReference type="Proteomes" id="UP000186698">
    <property type="component" value="Chromosome 4L"/>
</dbReference>
<dbReference type="Bgee" id="394304">
    <property type="expression patterns" value="Expressed in gastrula and 2 other cell types or tissues"/>
</dbReference>
<dbReference type="GO" id="GO:0005634">
    <property type="term" value="C:nucleus"/>
    <property type="evidence" value="ECO:0000303"/>
    <property type="project" value="UniProtKB"/>
</dbReference>
<dbReference type="GO" id="GO:0003700">
    <property type="term" value="F:DNA-binding transcription factor activity"/>
    <property type="evidence" value="ECO:0000303"/>
    <property type="project" value="UniProtKB"/>
</dbReference>
<dbReference type="GO" id="GO:0000981">
    <property type="term" value="F:DNA-binding transcription factor activity, RNA polymerase II-specific"/>
    <property type="evidence" value="ECO:0000318"/>
    <property type="project" value="GO_Central"/>
</dbReference>
<dbReference type="GO" id="GO:0019904">
    <property type="term" value="F:protein domain specific binding"/>
    <property type="evidence" value="ECO:0007669"/>
    <property type="project" value="InterPro"/>
</dbReference>
<dbReference type="GO" id="GO:0000978">
    <property type="term" value="F:RNA polymerase II cis-regulatory region sequence-specific DNA binding"/>
    <property type="evidence" value="ECO:0000318"/>
    <property type="project" value="GO_Central"/>
</dbReference>
<dbReference type="GO" id="GO:0043565">
    <property type="term" value="F:sequence-specific DNA binding"/>
    <property type="evidence" value="ECO:0000314"/>
    <property type="project" value="UniProtKB"/>
</dbReference>
<dbReference type="GO" id="GO:0009653">
    <property type="term" value="P:anatomical structure morphogenesis"/>
    <property type="evidence" value="ECO:0000318"/>
    <property type="project" value="GO_Central"/>
</dbReference>
<dbReference type="GO" id="GO:0009948">
    <property type="term" value="P:anterior/posterior axis specification"/>
    <property type="evidence" value="ECO:0000315"/>
    <property type="project" value="UniProtKB"/>
</dbReference>
<dbReference type="GO" id="GO:0030154">
    <property type="term" value="P:cell differentiation"/>
    <property type="evidence" value="ECO:0000318"/>
    <property type="project" value="GO_Central"/>
</dbReference>
<dbReference type="GO" id="GO:0030900">
    <property type="term" value="P:forebrain development"/>
    <property type="evidence" value="ECO:0000315"/>
    <property type="project" value="UniProtKB"/>
</dbReference>
<dbReference type="GO" id="GO:0001707">
    <property type="term" value="P:mesoderm formation"/>
    <property type="evidence" value="ECO:0000315"/>
    <property type="project" value="UniProtKB"/>
</dbReference>
<dbReference type="GO" id="GO:0045892">
    <property type="term" value="P:negative regulation of DNA-templated transcription"/>
    <property type="evidence" value="ECO:0000314"/>
    <property type="project" value="UniProtKB"/>
</dbReference>
<dbReference type="GO" id="GO:0001840">
    <property type="term" value="P:neural plate development"/>
    <property type="evidence" value="ECO:0000315"/>
    <property type="project" value="UniProtKB"/>
</dbReference>
<dbReference type="GO" id="GO:0006355">
    <property type="term" value="P:regulation of DNA-templated transcription"/>
    <property type="evidence" value="ECO:0000303"/>
    <property type="project" value="UniProtKB"/>
</dbReference>
<dbReference type="GO" id="GO:0006357">
    <property type="term" value="P:regulation of transcription by RNA polymerase II"/>
    <property type="evidence" value="ECO:0000318"/>
    <property type="project" value="GO_Central"/>
</dbReference>
<dbReference type="FunFam" id="1.10.10.10:FF:000042">
    <property type="entry name" value="hepatocyte nuclear factor 3-beta"/>
    <property type="match status" value="1"/>
</dbReference>
<dbReference type="Gene3D" id="1.10.10.10">
    <property type="entry name" value="Winged helix-like DNA-binding domain superfamily/Winged helix DNA-binding domain"/>
    <property type="match status" value="1"/>
</dbReference>
<dbReference type="InterPro" id="IPR013638">
    <property type="entry name" value="Fork-head_N"/>
</dbReference>
<dbReference type="InterPro" id="IPR001766">
    <property type="entry name" value="Fork_head_dom"/>
</dbReference>
<dbReference type="InterPro" id="IPR018533">
    <property type="entry name" value="Forkhead_box_C"/>
</dbReference>
<dbReference type="InterPro" id="IPR050211">
    <property type="entry name" value="FOX_domain-containing"/>
</dbReference>
<dbReference type="InterPro" id="IPR018122">
    <property type="entry name" value="TF_fork_head_CS_1"/>
</dbReference>
<dbReference type="InterPro" id="IPR030456">
    <property type="entry name" value="TF_fork_head_CS_2"/>
</dbReference>
<dbReference type="InterPro" id="IPR036388">
    <property type="entry name" value="WH-like_DNA-bd_sf"/>
</dbReference>
<dbReference type="InterPro" id="IPR036390">
    <property type="entry name" value="WH_DNA-bd_sf"/>
</dbReference>
<dbReference type="PANTHER" id="PTHR11829">
    <property type="entry name" value="FORKHEAD BOX PROTEIN"/>
    <property type="match status" value="1"/>
</dbReference>
<dbReference type="PANTHER" id="PTHR11829:SF400">
    <property type="entry name" value="FORKHEAD BOX PROTEIN A4"/>
    <property type="match status" value="1"/>
</dbReference>
<dbReference type="Pfam" id="PF00250">
    <property type="entry name" value="Forkhead"/>
    <property type="match status" value="1"/>
</dbReference>
<dbReference type="Pfam" id="PF08430">
    <property type="entry name" value="Forkhead_N"/>
    <property type="match status" value="1"/>
</dbReference>
<dbReference type="Pfam" id="PF09354">
    <property type="entry name" value="HNF_C"/>
    <property type="match status" value="1"/>
</dbReference>
<dbReference type="PRINTS" id="PR00053">
    <property type="entry name" value="FORKHEAD"/>
</dbReference>
<dbReference type="SMART" id="SM00339">
    <property type="entry name" value="FH"/>
    <property type="match status" value="1"/>
</dbReference>
<dbReference type="SUPFAM" id="SSF46785">
    <property type="entry name" value="Winged helix' DNA-binding domain"/>
    <property type="match status" value="1"/>
</dbReference>
<dbReference type="PROSITE" id="PS00657">
    <property type="entry name" value="FORK_HEAD_1"/>
    <property type="match status" value="1"/>
</dbReference>
<dbReference type="PROSITE" id="PS00658">
    <property type="entry name" value="FORK_HEAD_2"/>
    <property type="match status" value="1"/>
</dbReference>
<dbReference type="PROSITE" id="PS50039">
    <property type="entry name" value="FORK_HEAD_3"/>
    <property type="match status" value="1"/>
</dbReference>